<evidence type="ECO:0000255" key="1">
    <source>
        <dbReference type="HAMAP-Rule" id="MF_00036"/>
    </source>
</evidence>
<accession>Q2GJ36</accession>
<feature type="chain" id="PRO_0000347490" description="Alanine--tRNA ligase">
    <location>
        <begin position="1"/>
        <end position="876"/>
    </location>
</feature>
<feature type="binding site" evidence="1">
    <location>
        <position position="568"/>
    </location>
    <ligand>
        <name>Zn(2+)</name>
        <dbReference type="ChEBI" id="CHEBI:29105"/>
    </ligand>
</feature>
<feature type="binding site" evidence="1">
    <location>
        <position position="572"/>
    </location>
    <ligand>
        <name>Zn(2+)</name>
        <dbReference type="ChEBI" id="CHEBI:29105"/>
    </ligand>
</feature>
<feature type="binding site" evidence="1">
    <location>
        <position position="670"/>
    </location>
    <ligand>
        <name>Zn(2+)</name>
        <dbReference type="ChEBI" id="CHEBI:29105"/>
    </ligand>
</feature>
<feature type="binding site" evidence="1">
    <location>
        <position position="674"/>
    </location>
    <ligand>
        <name>Zn(2+)</name>
        <dbReference type="ChEBI" id="CHEBI:29105"/>
    </ligand>
</feature>
<name>SYA_ANAPZ</name>
<gene>
    <name evidence="1" type="primary">alaS</name>
    <name type="ordered locus">APH_1059</name>
</gene>
<reference key="1">
    <citation type="journal article" date="2006" name="PLoS Genet.">
        <title>Comparative genomics of emerging human ehrlichiosis agents.</title>
        <authorList>
            <person name="Dunning Hotopp J.C."/>
            <person name="Lin M."/>
            <person name="Madupu R."/>
            <person name="Crabtree J."/>
            <person name="Angiuoli S.V."/>
            <person name="Eisen J.A."/>
            <person name="Seshadri R."/>
            <person name="Ren Q."/>
            <person name="Wu M."/>
            <person name="Utterback T.R."/>
            <person name="Smith S."/>
            <person name="Lewis M."/>
            <person name="Khouri H."/>
            <person name="Zhang C."/>
            <person name="Niu H."/>
            <person name="Lin Q."/>
            <person name="Ohashi N."/>
            <person name="Zhi N."/>
            <person name="Nelson W.C."/>
            <person name="Brinkac L.M."/>
            <person name="Dodson R.J."/>
            <person name="Rosovitz M.J."/>
            <person name="Sundaram J.P."/>
            <person name="Daugherty S.C."/>
            <person name="Davidsen T."/>
            <person name="Durkin A.S."/>
            <person name="Gwinn M.L."/>
            <person name="Haft D.H."/>
            <person name="Selengut J.D."/>
            <person name="Sullivan S.A."/>
            <person name="Zafar N."/>
            <person name="Zhou L."/>
            <person name="Benahmed F."/>
            <person name="Forberger H."/>
            <person name="Halpin R."/>
            <person name="Mulligan S."/>
            <person name="Robinson J."/>
            <person name="White O."/>
            <person name="Rikihisa Y."/>
            <person name="Tettelin H."/>
        </authorList>
    </citation>
    <scope>NUCLEOTIDE SEQUENCE [LARGE SCALE GENOMIC DNA]</scope>
    <source>
        <strain>HZ</strain>
    </source>
</reference>
<organism>
    <name type="scientific">Anaplasma phagocytophilum (strain HZ)</name>
    <dbReference type="NCBI Taxonomy" id="212042"/>
    <lineage>
        <taxon>Bacteria</taxon>
        <taxon>Pseudomonadati</taxon>
        <taxon>Pseudomonadota</taxon>
        <taxon>Alphaproteobacteria</taxon>
        <taxon>Rickettsiales</taxon>
        <taxon>Anaplasmataceae</taxon>
        <taxon>Anaplasma</taxon>
        <taxon>phagocytophilum group</taxon>
    </lineage>
</organism>
<proteinExistence type="inferred from homology"/>
<comment type="function">
    <text evidence="1">Catalyzes the attachment of alanine to tRNA(Ala) in a two-step reaction: alanine is first activated by ATP to form Ala-AMP and then transferred to the acceptor end of tRNA(Ala). Also edits incorrectly charged Ser-tRNA(Ala) and Gly-tRNA(Ala) via its editing domain.</text>
</comment>
<comment type="catalytic activity">
    <reaction evidence="1">
        <text>tRNA(Ala) + L-alanine + ATP = L-alanyl-tRNA(Ala) + AMP + diphosphate</text>
        <dbReference type="Rhea" id="RHEA:12540"/>
        <dbReference type="Rhea" id="RHEA-COMP:9657"/>
        <dbReference type="Rhea" id="RHEA-COMP:9923"/>
        <dbReference type="ChEBI" id="CHEBI:30616"/>
        <dbReference type="ChEBI" id="CHEBI:33019"/>
        <dbReference type="ChEBI" id="CHEBI:57972"/>
        <dbReference type="ChEBI" id="CHEBI:78442"/>
        <dbReference type="ChEBI" id="CHEBI:78497"/>
        <dbReference type="ChEBI" id="CHEBI:456215"/>
        <dbReference type="EC" id="6.1.1.7"/>
    </reaction>
</comment>
<comment type="cofactor">
    <cofactor evidence="1">
        <name>Zn(2+)</name>
        <dbReference type="ChEBI" id="CHEBI:29105"/>
    </cofactor>
    <text evidence="1">Binds 1 zinc ion per subunit.</text>
</comment>
<comment type="subcellular location">
    <subcellularLocation>
        <location evidence="1">Cytoplasm</location>
    </subcellularLocation>
</comment>
<comment type="domain">
    <text evidence="1">Consists of three domains; the N-terminal catalytic domain, the editing domain and the C-terminal C-Ala domain. The editing domain removes incorrectly charged amino acids, while the C-Ala domain, along with tRNA(Ala), serves as a bridge to cooperatively bring together the editing and aminoacylation centers thus stimulating deacylation of misacylated tRNAs.</text>
</comment>
<comment type="similarity">
    <text evidence="1">Belongs to the class-II aminoacyl-tRNA synthetase family.</text>
</comment>
<sequence length="876" mass="96764">MSSSSVSGIREAFLDFFEKQGHTRYPSAPLIAEGDASLLFTNAGMVPFKQRFITGVSDVKTATTSQKCLRAGGKHNDLENVGYTNRHHTFFEMLGNFSFGDYFKETAIELAWRFVTKELGLSKERLWITVYSEDQEAFDIWKKITGYTDHKIIRISTSDNFWSMGDTGPCGPCSEIFYDYGDGVPGGLPGTDESDGARYTEIWNLVFMQYNRDESGELHKLPRGCIDTGMGLERIAAVMQGVCDNYETDMFQAIIDRSRSIFGSHDHPIAHRVIADHVRAASFLIAEGLTPGNEGRNYVLRRIIRRAVRYIYQIVGDKFSLHEVVPVLTREGSAGYMGNAYPEIVKAEQSIVSTLKIEEDGFADTLRRGTGILEQEIRGLKSGEVLSGEIAFKLYDTYGFPLDITLDVAKERGLKFDEDGFNRCMAKQKEQSRKHWKGSGEAQTASSHILNKHKATSFVGYENHRVKSMVKEIFCSGEAVTSMGEGEEGIAVLDITPFYAESGGQEGDTGLLKVVTTKCGSVAEVVDTTKSNNVHLHKIRVIRGTLKVGDVVEAVVDKQRREKLRANHSATHILQSVLRTLIGEGIQQKGSLVAADKLRFDFSHALPLTKEQLRTVEMEVNRQIMANQPVIIDHCSLEDAVQEGAIALFGEKYNDQNVRVVSMGSSKELCGGTHVRFTGDIGAFRIISETGIAQGVRRIEAITGHEVVSSMNRDSESLQQVAECLSVPVDQVIEKLKKVFVEQREINKKMATICYTHMNSCAKCIEVGSEIKLYVGEFSNIPVEVVASYVKEKMHTNEVLAISTTDGKRTTFIVGVGESAIKRIKATDIVKALQQIQGKGGGNASIARASLPSEYSAKAAEIIRQTVIDAIQNSGA</sequence>
<protein>
    <recommendedName>
        <fullName evidence="1">Alanine--tRNA ligase</fullName>
        <ecNumber evidence="1">6.1.1.7</ecNumber>
    </recommendedName>
    <alternativeName>
        <fullName evidence="1">Alanyl-tRNA synthetase</fullName>
        <shortName evidence="1">AlaRS</shortName>
    </alternativeName>
</protein>
<keyword id="KW-0030">Aminoacyl-tRNA synthetase</keyword>
<keyword id="KW-0067">ATP-binding</keyword>
<keyword id="KW-0963">Cytoplasm</keyword>
<keyword id="KW-0436">Ligase</keyword>
<keyword id="KW-0479">Metal-binding</keyword>
<keyword id="KW-0547">Nucleotide-binding</keyword>
<keyword id="KW-0648">Protein biosynthesis</keyword>
<keyword id="KW-0694">RNA-binding</keyword>
<keyword id="KW-0820">tRNA-binding</keyword>
<keyword id="KW-0862">Zinc</keyword>
<dbReference type="EC" id="6.1.1.7" evidence="1"/>
<dbReference type="EMBL" id="CP000235">
    <property type="protein sequence ID" value="ABD44304.1"/>
    <property type="molecule type" value="Genomic_DNA"/>
</dbReference>
<dbReference type="RefSeq" id="WP_011451127.1">
    <property type="nucleotide sequence ID" value="NC_007797.1"/>
</dbReference>
<dbReference type="SMR" id="Q2GJ36"/>
<dbReference type="STRING" id="212042.APH_1059"/>
<dbReference type="PaxDb" id="212042-APH_1059"/>
<dbReference type="EnsemblBacteria" id="ABD44304">
    <property type="protein sequence ID" value="ABD44304"/>
    <property type="gene ID" value="APH_1059"/>
</dbReference>
<dbReference type="GeneID" id="92748019"/>
<dbReference type="KEGG" id="aph:APH_1059"/>
<dbReference type="eggNOG" id="COG0013">
    <property type="taxonomic scope" value="Bacteria"/>
</dbReference>
<dbReference type="HOGENOM" id="CLU_004485_1_1_5"/>
<dbReference type="Proteomes" id="UP000001943">
    <property type="component" value="Chromosome"/>
</dbReference>
<dbReference type="GO" id="GO:0005829">
    <property type="term" value="C:cytosol"/>
    <property type="evidence" value="ECO:0007669"/>
    <property type="project" value="TreeGrafter"/>
</dbReference>
<dbReference type="GO" id="GO:0004813">
    <property type="term" value="F:alanine-tRNA ligase activity"/>
    <property type="evidence" value="ECO:0007669"/>
    <property type="project" value="UniProtKB-UniRule"/>
</dbReference>
<dbReference type="GO" id="GO:0002161">
    <property type="term" value="F:aminoacyl-tRNA deacylase activity"/>
    <property type="evidence" value="ECO:0007669"/>
    <property type="project" value="TreeGrafter"/>
</dbReference>
<dbReference type="GO" id="GO:0005524">
    <property type="term" value="F:ATP binding"/>
    <property type="evidence" value="ECO:0007669"/>
    <property type="project" value="UniProtKB-UniRule"/>
</dbReference>
<dbReference type="GO" id="GO:0000049">
    <property type="term" value="F:tRNA binding"/>
    <property type="evidence" value="ECO:0007669"/>
    <property type="project" value="UniProtKB-KW"/>
</dbReference>
<dbReference type="GO" id="GO:0008270">
    <property type="term" value="F:zinc ion binding"/>
    <property type="evidence" value="ECO:0007669"/>
    <property type="project" value="UniProtKB-UniRule"/>
</dbReference>
<dbReference type="GO" id="GO:0006419">
    <property type="term" value="P:alanyl-tRNA aminoacylation"/>
    <property type="evidence" value="ECO:0007669"/>
    <property type="project" value="UniProtKB-UniRule"/>
</dbReference>
<dbReference type="GO" id="GO:0045892">
    <property type="term" value="P:negative regulation of DNA-templated transcription"/>
    <property type="evidence" value="ECO:0007669"/>
    <property type="project" value="TreeGrafter"/>
</dbReference>
<dbReference type="CDD" id="cd00673">
    <property type="entry name" value="AlaRS_core"/>
    <property type="match status" value="1"/>
</dbReference>
<dbReference type="FunFam" id="3.30.54.20:FF:000001">
    <property type="entry name" value="Alanine--tRNA ligase"/>
    <property type="match status" value="1"/>
</dbReference>
<dbReference type="FunFam" id="3.30.930.10:FF:000004">
    <property type="entry name" value="Alanine--tRNA ligase"/>
    <property type="match status" value="1"/>
</dbReference>
<dbReference type="FunFam" id="3.30.980.10:FF:000004">
    <property type="entry name" value="Alanine--tRNA ligase, cytoplasmic"/>
    <property type="match status" value="1"/>
</dbReference>
<dbReference type="Gene3D" id="2.40.30.130">
    <property type="match status" value="1"/>
</dbReference>
<dbReference type="Gene3D" id="3.10.310.40">
    <property type="match status" value="1"/>
</dbReference>
<dbReference type="Gene3D" id="3.30.54.20">
    <property type="match status" value="1"/>
</dbReference>
<dbReference type="Gene3D" id="3.30.930.10">
    <property type="entry name" value="Bira Bifunctional Protein, Domain 2"/>
    <property type="match status" value="1"/>
</dbReference>
<dbReference type="Gene3D" id="3.30.980.10">
    <property type="entry name" value="Threonyl-trna Synthetase, Chain A, domain 2"/>
    <property type="match status" value="1"/>
</dbReference>
<dbReference type="HAMAP" id="MF_00036_B">
    <property type="entry name" value="Ala_tRNA_synth_B"/>
    <property type="match status" value="1"/>
</dbReference>
<dbReference type="InterPro" id="IPR045864">
    <property type="entry name" value="aa-tRNA-synth_II/BPL/LPL"/>
</dbReference>
<dbReference type="InterPro" id="IPR002318">
    <property type="entry name" value="Ala-tRNA-lgiase_IIc"/>
</dbReference>
<dbReference type="InterPro" id="IPR018162">
    <property type="entry name" value="Ala-tRNA-ligase_IIc_anticod-bd"/>
</dbReference>
<dbReference type="InterPro" id="IPR018165">
    <property type="entry name" value="Ala-tRNA-synth_IIc_core"/>
</dbReference>
<dbReference type="InterPro" id="IPR018164">
    <property type="entry name" value="Ala-tRNA-synth_IIc_N"/>
</dbReference>
<dbReference type="InterPro" id="IPR050058">
    <property type="entry name" value="Ala-tRNA_ligase"/>
</dbReference>
<dbReference type="InterPro" id="IPR023033">
    <property type="entry name" value="Ala_tRNA_ligase_euk/bac"/>
</dbReference>
<dbReference type="InterPro" id="IPR003156">
    <property type="entry name" value="DHHA1_dom"/>
</dbReference>
<dbReference type="InterPro" id="IPR018163">
    <property type="entry name" value="Thr/Ala-tRNA-synth_IIc_edit"/>
</dbReference>
<dbReference type="InterPro" id="IPR009000">
    <property type="entry name" value="Transl_B-barrel_sf"/>
</dbReference>
<dbReference type="InterPro" id="IPR012947">
    <property type="entry name" value="tRNA_SAD"/>
</dbReference>
<dbReference type="NCBIfam" id="TIGR00344">
    <property type="entry name" value="alaS"/>
    <property type="match status" value="1"/>
</dbReference>
<dbReference type="PANTHER" id="PTHR11777:SF9">
    <property type="entry name" value="ALANINE--TRNA LIGASE, CYTOPLASMIC"/>
    <property type="match status" value="1"/>
</dbReference>
<dbReference type="PANTHER" id="PTHR11777">
    <property type="entry name" value="ALANYL-TRNA SYNTHETASE"/>
    <property type="match status" value="1"/>
</dbReference>
<dbReference type="Pfam" id="PF02272">
    <property type="entry name" value="DHHA1"/>
    <property type="match status" value="1"/>
</dbReference>
<dbReference type="Pfam" id="PF01411">
    <property type="entry name" value="tRNA-synt_2c"/>
    <property type="match status" value="1"/>
</dbReference>
<dbReference type="Pfam" id="PF07973">
    <property type="entry name" value="tRNA_SAD"/>
    <property type="match status" value="1"/>
</dbReference>
<dbReference type="PRINTS" id="PR00980">
    <property type="entry name" value="TRNASYNTHALA"/>
</dbReference>
<dbReference type="SMART" id="SM00863">
    <property type="entry name" value="tRNA_SAD"/>
    <property type="match status" value="1"/>
</dbReference>
<dbReference type="SUPFAM" id="SSF55681">
    <property type="entry name" value="Class II aaRS and biotin synthetases"/>
    <property type="match status" value="1"/>
</dbReference>
<dbReference type="SUPFAM" id="SSF101353">
    <property type="entry name" value="Putative anticodon-binding domain of alanyl-tRNA synthetase (AlaRS)"/>
    <property type="match status" value="1"/>
</dbReference>
<dbReference type="SUPFAM" id="SSF55186">
    <property type="entry name" value="ThrRS/AlaRS common domain"/>
    <property type="match status" value="1"/>
</dbReference>
<dbReference type="SUPFAM" id="SSF50447">
    <property type="entry name" value="Translation proteins"/>
    <property type="match status" value="1"/>
</dbReference>
<dbReference type="PROSITE" id="PS50860">
    <property type="entry name" value="AA_TRNA_LIGASE_II_ALA"/>
    <property type="match status" value="1"/>
</dbReference>